<organism evidence="12">
    <name type="scientific">Saccharomyces cerevisiae (strain ATCC 204508 / S288c)</name>
    <name type="common">Baker's yeast</name>
    <dbReference type="NCBI Taxonomy" id="559292"/>
    <lineage>
        <taxon>Eukaryota</taxon>
        <taxon>Fungi</taxon>
        <taxon>Dikarya</taxon>
        <taxon>Ascomycota</taxon>
        <taxon>Saccharomycotina</taxon>
        <taxon>Saccharomycetes</taxon>
        <taxon>Saccharomycetales</taxon>
        <taxon>Saccharomycetaceae</taxon>
        <taxon>Saccharomyces</taxon>
    </lineage>
</organism>
<feature type="transit peptide" description="Mitochondrion" evidence="3">
    <location>
        <begin position="1"/>
        <end position="26"/>
    </location>
</feature>
<feature type="chain" id="PRO_0000019701" description="Iron sulfur cluster assembly protein 2, mitochondrial">
    <location>
        <begin position="27"/>
        <end position="156"/>
    </location>
</feature>
<comment type="function">
    <text evidence="1 5 8 10">Scaffold protein for the de novo synthesis of iron-sulfur (Fe-S) clusters within mitochondria, which is required for maturation of both mitochondrial and cytoplasmic [2Fe-2S] and [4Fe-4S] proteins (By similarity). First, a [2Fe-2S] cluster is transiently assembled on the scaffold proteins ISU1 and ISU2 (By similarity). In a second step, the cluster is released from ISU1/ISU2, transferred to glutaredoxin GRX5, followed by the formation of mitochondrial [2Fe-2S] proteins, the synthesis of [4Fe-4S] clusters and their target-specific insertion into the recipient apoproteins (By similarity). Cluster assembly on ISU1/ISU2 depends on the function of the cysteine desulfurase complex NFS1-ISD11, which serves as the sulfur donor for cluster synthesis, the iron-binding protein frataxin (YFH1) as the putative iron donor, and the electron transfer chain comprised of ferredoxin reductase ARH1 and ferredoxin YAH1, which receive their electrons from NADH (By similarity). Fe-S cluster release from ISU1/ISU2 is achieved by interaction with the Hsp70 chaperone SSQ1, assisted by the DnaJ-like co-chaperone JAC1 and the nucleotide exchange factor MGE1 (PubMed:23615440). ISU1 is the major isoform in yeast, while ISU2 is not detectable in cells grown to stationary phase (PubMed:10588895). Also involved in production of a sulfur precursor required for thiolation of cytoplasmic tRNAs (PubMed:31040179).</text>
</comment>
<comment type="cofactor">
    <cofactor evidence="2">
        <name>[2Fe-2S] cluster</name>
        <dbReference type="ChEBI" id="CHEBI:190135"/>
    </cofactor>
    <text evidence="2">Binds 1 [2Fe-2S] cluster per subunit.</text>
</comment>
<comment type="pathway">
    <text evidence="5 7">Cofactor biosynthesis; iron-sulfur cluster biosynthesis.</text>
</comment>
<comment type="subunit">
    <text evidence="2">Component of the core Fe-S cluster (ISC) assembly machinery. Interacts with frataxin (By similarity). Interacts with the mitochondrial co-chaperones JAC1 and SSQ1 (By similarity). Interacts with NFS1 (By similarity). Interacts with ferredoxin YAH1; interacts with the reduced form (By similarity).</text>
</comment>
<comment type="subcellular location">
    <subcellularLocation>
        <location evidence="4 5">Mitochondrion matrix</location>
    </subcellularLocation>
</comment>
<comment type="disruption phenotype">
    <text evidence="4 5 8 9 10">Cells deleted for both ISU1 and ISU2 have decreased activity of several respiratory enzymes that contain Fe-S clusters (PubMed:10468587, PubMed:10588895). As a result, cells grow poorly on carbon sources requiring respiration and also accumulate abnormally high levels of iron in their mitochondria (PubMed:10468587, PubMed:10588895). Knockdown of ISU1 in ISU2 knockout cells reduces cell growth, decreases cytosolic tRNA thiolation, and increases association between SSQ1 and GRX5 (PubMed:23615440, PubMed:27738674, PubMed:31040179).</text>
</comment>
<comment type="miscellaneous">
    <text evidence="6">Present with 3420 molecules/cell in log phase SD medium.</text>
</comment>
<comment type="similarity">
    <text evidence="11">Belongs to the NifU family.</text>
</comment>
<sequence>MFARLANPAHFKPLTGSHITRAAKRLYHPKVIDHYTNPRNVGSMDKSLANVGTGIVGAPACGDVIKLQIQVNDKSGIIENVKFKTFGCGSAIASSSYMTELVRGMSLDEAVKIKNTEIAKELSLPPVKLHCSMLAEDAIKAAIKDYKTKRNPSVLH</sequence>
<name>ISU2_YEAST</name>
<keyword id="KW-0001">2Fe-2S</keyword>
<keyword id="KW-0408">Iron</keyword>
<keyword id="KW-0411">Iron-sulfur</keyword>
<keyword id="KW-0479">Metal-binding</keyword>
<keyword id="KW-0496">Mitochondrion</keyword>
<keyword id="KW-1185">Reference proteome</keyword>
<keyword id="KW-0809">Transit peptide</keyword>
<dbReference type="EMBL" id="Z75133">
    <property type="protein sequence ID" value="CAA99445.1"/>
    <property type="molecule type" value="Genomic_DNA"/>
</dbReference>
<dbReference type="EMBL" id="X92441">
    <property type="protein sequence ID" value="CAA63189.1"/>
    <property type="molecule type" value="Genomic_DNA"/>
</dbReference>
<dbReference type="EMBL" id="BK006948">
    <property type="protein sequence ID" value="DAA10996.1"/>
    <property type="molecule type" value="Genomic_DNA"/>
</dbReference>
<dbReference type="PIR" id="S60953">
    <property type="entry name" value="S60953"/>
</dbReference>
<dbReference type="RefSeq" id="NP_014869.3">
    <property type="nucleotide sequence ID" value="NM_001183645.3"/>
</dbReference>
<dbReference type="SMR" id="Q12056"/>
<dbReference type="BioGRID" id="34619">
    <property type="interactions" value="51"/>
</dbReference>
<dbReference type="DIP" id="DIP-4123N"/>
<dbReference type="FunCoup" id="Q12056">
    <property type="interactions" value="522"/>
</dbReference>
<dbReference type="IntAct" id="Q12056">
    <property type="interactions" value="6"/>
</dbReference>
<dbReference type="MINT" id="Q12056"/>
<dbReference type="STRING" id="4932.YOR226C"/>
<dbReference type="iPTMnet" id="Q12056"/>
<dbReference type="PaxDb" id="4932-YOR226C"/>
<dbReference type="PeptideAtlas" id="Q12056"/>
<dbReference type="EnsemblFungi" id="YOR226C_mRNA">
    <property type="protein sequence ID" value="YOR226C"/>
    <property type="gene ID" value="YOR226C"/>
</dbReference>
<dbReference type="GeneID" id="854401"/>
<dbReference type="KEGG" id="sce:YOR226C"/>
<dbReference type="AGR" id="SGD:S000005752"/>
<dbReference type="SGD" id="S000005752">
    <property type="gene designation" value="ISU2"/>
</dbReference>
<dbReference type="VEuPathDB" id="FungiDB:YOR226C"/>
<dbReference type="eggNOG" id="KOG3361">
    <property type="taxonomic scope" value="Eukaryota"/>
</dbReference>
<dbReference type="GeneTree" id="ENSGT00390000015813"/>
<dbReference type="HOGENOM" id="CLU_079283_5_0_1"/>
<dbReference type="InParanoid" id="Q12056"/>
<dbReference type="OMA" id="YMTERVR"/>
<dbReference type="OrthoDB" id="1925777at2759"/>
<dbReference type="BioCyc" id="YEAST:G3O-33724-MONOMER"/>
<dbReference type="UniPathway" id="UPA00266"/>
<dbReference type="BioGRID-ORCS" id="854401">
    <property type="hits" value="7 hits in 10 CRISPR screens"/>
</dbReference>
<dbReference type="PRO" id="PR:Q12056"/>
<dbReference type="Proteomes" id="UP000002311">
    <property type="component" value="Chromosome XV"/>
</dbReference>
<dbReference type="RNAct" id="Q12056">
    <property type="molecule type" value="protein"/>
</dbReference>
<dbReference type="GO" id="GO:0005737">
    <property type="term" value="C:cytoplasm"/>
    <property type="evidence" value="ECO:0000318"/>
    <property type="project" value="GO_Central"/>
</dbReference>
<dbReference type="GO" id="GO:0005759">
    <property type="term" value="C:mitochondrial matrix"/>
    <property type="evidence" value="ECO:0000314"/>
    <property type="project" value="SGD"/>
</dbReference>
<dbReference type="GO" id="GO:0051537">
    <property type="term" value="F:2 iron, 2 sulfur cluster binding"/>
    <property type="evidence" value="ECO:0000318"/>
    <property type="project" value="GO_Central"/>
</dbReference>
<dbReference type="GO" id="GO:0008198">
    <property type="term" value="F:ferrous iron binding"/>
    <property type="evidence" value="ECO:0000318"/>
    <property type="project" value="GO_Central"/>
</dbReference>
<dbReference type="GO" id="GO:0006879">
    <property type="term" value="P:intracellular iron ion homeostasis"/>
    <property type="evidence" value="ECO:0000315"/>
    <property type="project" value="SGD"/>
</dbReference>
<dbReference type="GO" id="GO:0016226">
    <property type="term" value="P:iron-sulfur cluster assembly"/>
    <property type="evidence" value="ECO:0000315"/>
    <property type="project" value="SGD"/>
</dbReference>
<dbReference type="GO" id="GO:0002098">
    <property type="term" value="P:tRNA wobble uridine modification"/>
    <property type="evidence" value="ECO:0000316"/>
    <property type="project" value="SGD"/>
</dbReference>
<dbReference type="CDD" id="cd06664">
    <property type="entry name" value="IscU_like"/>
    <property type="match status" value="1"/>
</dbReference>
<dbReference type="FunFam" id="3.90.1010.10:FF:000005">
    <property type="entry name" value="Iron-sulfur cluster assembly protein"/>
    <property type="match status" value="1"/>
</dbReference>
<dbReference type="Gene3D" id="3.90.1010.10">
    <property type="match status" value="1"/>
</dbReference>
<dbReference type="InterPro" id="IPR011339">
    <property type="entry name" value="ISCU"/>
</dbReference>
<dbReference type="InterPro" id="IPR002871">
    <property type="entry name" value="NIF_FeS_clus_asmbl_NifU_N"/>
</dbReference>
<dbReference type="NCBIfam" id="TIGR01999">
    <property type="entry name" value="iscU"/>
    <property type="match status" value="1"/>
</dbReference>
<dbReference type="PANTHER" id="PTHR10093">
    <property type="entry name" value="IRON-SULFUR CLUSTER ASSEMBLY ENZYME NIFU HOMOLOG"/>
    <property type="match status" value="1"/>
</dbReference>
<dbReference type="Pfam" id="PF01592">
    <property type="entry name" value="NifU_N"/>
    <property type="match status" value="1"/>
</dbReference>
<dbReference type="SUPFAM" id="SSF82649">
    <property type="entry name" value="SufE/NifU"/>
    <property type="match status" value="1"/>
</dbReference>
<proteinExistence type="evidence at protein level"/>
<reference key="1">
    <citation type="journal article" date="1996" name="Yeast">
        <title>Sequence and analysis of a 33 kb fragment from the right arm of chromosome XV of the yeast Saccharomyces cerevisiae.</title>
        <authorList>
            <person name="Galisson F."/>
            <person name="Dujon B."/>
        </authorList>
    </citation>
    <scope>NUCLEOTIDE SEQUENCE [GENOMIC DNA]</scope>
    <source>
        <strain>ATCC 96604 / S288c / FY1679</strain>
    </source>
</reference>
<reference key="2">
    <citation type="journal article" date="1997" name="Nature">
        <title>The nucleotide sequence of Saccharomyces cerevisiae chromosome XV.</title>
        <authorList>
            <person name="Dujon B."/>
            <person name="Albermann K."/>
            <person name="Aldea M."/>
            <person name="Alexandraki D."/>
            <person name="Ansorge W."/>
            <person name="Arino J."/>
            <person name="Benes V."/>
            <person name="Bohn C."/>
            <person name="Bolotin-Fukuhara M."/>
            <person name="Bordonne R."/>
            <person name="Boyer J."/>
            <person name="Camasses A."/>
            <person name="Casamayor A."/>
            <person name="Casas C."/>
            <person name="Cheret G."/>
            <person name="Cziepluch C."/>
            <person name="Daignan-Fornier B."/>
            <person name="Dang V.-D."/>
            <person name="de Haan M."/>
            <person name="Delius H."/>
            <person name="Durand P."/>
            <person name="Fairhead C."/>
            <person name="Feldmann H."/>
            <person name="Gaillon L."/>
            <person name="Galisson F."/>
            <person name="Gamo F.-J."/>
            <person name="Gancedo C."/>
            <person name="Goffeau A."/>
            <person name="Goulding S.E."/>
            <person name="Grivell L.A."/>
            <person name="Habbig B."/>
            <person name="Hand N.J."/>
            <person name="Hani J."/>
            <person name="Hattenhorst U."/>
            <person name="Hebling U."/>
            <person name="Hernando Y."/>
            <person name="Herrero E."/>
            <person name="Heumann K."/>
            <person name="Hiesel R."/>
            <person name="Hilger F."/>
            <person name="Hofmann B."/>
            <person name="Hollenberg C.P."/>
            <person name="Hughes B."/>
            <person name="Jauniaux J.-C."/>
            <person name="Kalogeropoulos A."/>
            <person name="Katsoulou C."/>
            <person name="Kordes E."/>
            <person name="Lafuente M.J."/>
            <person name="Landt O."/>
            <person name="Louis E.J."/>
            <person name="Maarse A.C."/>
            <person name="Madania A."/>
            <person name="Mannhaupt G."/>
            <person name="Marck C."/>
            <person name="Martin R.P."/>
            <person name="Mewes H.-W."/>
            <person name="Michaux G."/>
            <person name="Paces V."/>
            <person name="Parle-McDermott A.G."/>
            <person name="Pearson B.M."/>
            <person name="Perrin A."/>
            <person name="Pettersson B."/>
            <person name="Poch O."/>
            <person name="Pohl T.M."/>
            <person name="Poirey R."/>
            <person name="Portetelle D."/>
            <person name="Pujol A."/>
            <person name="Purnelle B."/>
            <person name="Ramezani Rad M."/>
            <person name="Rechmann S."/>
            <person name="Schwager C."/>
            <person name="Schweizer M."/>
            <person name="Sor F."/>
            <person name="Sterky F."/>
            <person name="Tarassov I.A."/>
            <person name="Teodoru C."/>
            <person name="Tettelin H."/>
            <person name="Thierry A."/>
            <person name="Tobiasch E."/>
            <person name="Tzermia M."/>
            <person name="Uhlen M."/>
            <person name="Unseld M."/>
            <person name="Valens M."/>
            <person name="Vandenbol M."/>
            <person name="Vetter I."/>
            <person name="Vlcek C."/>
            <person name="Voet M."/>
            <person name="Volckaert G."/>
            <person name="Voss H."/>
            <person name="Wambutt R."/>
            <person name="Wedler H."/>
            <person name="Wiemann S."/>
            <person name="Winsor B."/>
            <person name="Wolfe K.H."/>
            <person name="Zollner A."/>
            <person name="Zumstein E."/>
            <person name="Kleine K."/>
        </authorList>
    </citation>
    <scope>NUCLEOTIDE SEQUENCE [LARGE SCALE GENOMIC DNA]</scope>
    <source>
        <strain>ATCC 204508 / S288c</strain>
    </source>
</reference>
<reference key="3">
    <citation type="journal article" date="2014" name="G3 (Bethesda)">
        <title>The reference genome sequence of Saccharomyces cerevisiae: Then and now.</title>
        <authorList>
            <person name="Engel S.R."/>
            <person name="Dietrich F.S."/>
            <person name="Fisk D.G."/>
            <person name="Binkley G."/>
            <person name="Balakrishnan R."/>
            <person name="Costanzo M.C."/>
            <person name="Dwight S.S."/>
            <person name="Hitz B.C."/>
            <person name="Karra K."/>
            <person name="Nash R.S."/>
            <person name="Weng S."/>
            <person name="Wong E.D."/>
            <person name="Lloyd P."/>
            <person name="Skrzypek M.S."/>
            <person name="Miyasato S.R."/>
            <person name="Simison M."/>
            <person name="Cherry J.M."/>
        </authorList>
    </citation>
    <scope>GENOME REANNOTATION</scope>
    <source>
        <strain>ATCC 204508 / S288c</strain>
    </source>
</reference>
<reference key="4">
    <citation type="journal article" date="1999" name="J. Mol. Biol.">
        <title>Saccharomyces cerevisiae ISU1 and ISU2: members of a well-conserved gene family for iron-sulfur cluster assembly.</title>
        <authorList>
            <person name="Garland S.A."/>
            <person name="Hoff K."/>
            <person name="Vickery L.E."/>
            <person name="Culotta V.C."/>
        </authorList>
    </citation>
    <scope>FUNCTION</scope>
    <scope>PATHWAY</scope>
    <scope>SUBCELLULAR LOCATION</scope>
    <scope>DISRUPTION PHENOTYPE</scope>
</reference>
<reference key="5">
    <citation type="journal article" date="1999" name="Proc. Natl. Acad. Sci. U.S.A.">
        <title>Evidence for a conserved system for iron metabolism in the mitochondria of Saccharomyces cerevisiae.</title>
        <authorList>
            <person name="Schilke B."/>
            <person name="Voisine C."/>
            <person name="Beinert H."/>
            <person name="Craig E."/>
        </authorList>
    </citation>
    <scope>SUBCELLULAR LOCATION</scope>
    <scope>DISRUPTION PHENOTYPE</scope>
</reference>
<reference key="6">
    <citation type="journal article" date="2003" name="Nature">
        <title>Global analysis of protein expression in yeast.</title>
        <authorList>
            <person name="Ghaemmaghami S."/>
            <person name="Huh W.-K."/>
            <person name="Bower K."/>
            <person name="Howson R.W."/>
            <person name="Belle A."/>
            <person name="Dephoure N."/>
            <person name="O'Shea E.K."/>
            <person name="Weissman J.S."/>
        </authorList>
    </citation>
    <scope>LEVEL OF PROTEIN EXPRESSION [LARGE SCALE ANALYSIS]</scope>
</reference>
<reference key="7">
    <citation type="journal article" date="2004" name="Mol. Cell. Biol.">
        <title>The yeast scaffold proteins Isu1p and Isu2p are required inside mitochondria for maturation of cytosolic Fe/S proteins.</title>
        <authorList>
            <person name="Gerber J."/>
            <person name="Neumann K."/>
            <person name="Prohl C."/>
            <person name="Muehlenhoff U."/>
            <person name="Lill R."/>
        </authorList>
    </citation>
    <scope>FUNCTION</scope>
    <scope>PATHWAY</scope>
</reference>
<reference key="8">
    <citation type="journal article" date="2013" name="Mol. Biol. Cell">
        <title>The mitochondrial Hsp70 chaperone Ssq1 facilitates Fe/S cluster transfer from Isu1 to Grx5 by complex formation.</title>
        <authorList>
            <person name="Uzarska M.A."/>
            <person name="Dutkiewicz R."/>
            <person name="Freibert S.A."/>
            <person name="Lill R."/>
            <person name="Muehlenhoff U."/>
        </authorList>
    </citation>
    <scope>FUNCTION</scope>
    <scope>DISRUPTION PHENOTYPE</scope>
</reference>
<reference key="9">
    <citation type="journal article" date="2017" name="Metallomics">
        <title>In vitro characterization of a novel Isu homologue from Drosophila melanogaster for de novo FeS-cluster formation.</title>
        <authorList>
            <person name="Dzul S.P."/>
            <person name="Rocha A.G."/>
            <person name="Rawat S."/>
            <person name="Kandegedara A."/>
            <person name="Kusowski A."/>
            <person name="Pain J."/>
            <person name="Murari A."/>
            <person name="Pain D."/>
            <person name="Dancis A."/>
            <person name="Stemmler T.L."/>
        </authorList>
    </citation>
    <scope>DISRUPTION PHENOTYPE</scope>
</reference>
<reference key="10">
    <citation type="journal article" date="2019" name="J. Biol. Chem.">
        <title>Mitochondria export iron-sulfur and sulfur intermediates to the cytoplasm for iron-sulfur cluster assembly and tRNA thiolation in yeast.</title>
        <authorList>
            <person name="Pandey A.K."/>
            <person name="Pain J."/>
            <person name="Dancis A."/>
            <person name="Pain D."/>
        </authorList>
    </citation>
    <scope>FUNCTION</scope>
    <scope>DISRUPTION PHENOTYPE</scope>
</reference>
<protein>
    <recommendedName>
        <fullName>Iron sulfur cluster assembly protein 2, mitochondrial</fullName>
    </recommendedName>
    <alternativeName>
        <fullName>Iron sulfur cluster scaffold protein 2</fullName>
    </alternativeName>
</protein>
<gene>
    <name evidence="13" type="primary">ISU2</name>
    <name type="synonym">NUA2</name>
    <name evidence="13" type="ordered locus">YOR226C</name>
</gene>
<accession>Q12056</accession>
<accession>D6W2T0</accession>
<evidence type="ECO:0000250" key="1">
    <source>
        <dbReference type="UniProtKB" id="Q03020"/>
    </source>
</evidence>
<evidence type="ECO:0000250" key="2">
    <source>
        <dbReference type="UniProtKB" id="Q9UTC6"/>
    </source>
</evidence>
<evidence type="ECO:0000255" key="3"/>
<evidence type="ECO:0000269" key="4">
    <source>
    </source>
</evidence>
<evidence type="ECO:0000269" key="5">
    <source>
    </source>
</evidence>
<evidence type="ECO:0000269" key="6">
    <source>
    </source>
</evidence>
<evidence type="ECO:0000269" key="7">
    <source>
    </source>
</evidence>
<evidence type="ECO:0000269" key="8">
    <source>
    </source>
</evidence>
<evidence type="ECO:0000269" key="9">
    <source>
    </source>
</evidence>
<evidence type="ECO:0000269" key="10">
    <source>
    </source>
</evidence>
<evidence type="ECO:0000305" key="11"/>
<evidence type="ECO:0000312" key="12">
    <source>
        <dbReference type="Proteomes" id="UP000002311"/>
    </source>
</evidence>
<evidence type="ECO:0000312" key="13">
    <source>
        <dbReference type="SGD" id="S000005752"/>
    </source>
</evidence>